<accession>Q197W8</accession>
<proteinExistence type="evidence at protein level"/>
<dbReference type="EMBL" id="DQ631804">
    <property type="protein sequence ID" value="ABF84064.1"/>
    <property type="molecule type" value="mRNA"/>
</dbReference>
<dbReference type="iPTMnet" id="Q197W8"/>
<dbReference type="PRO" id="PR:Q197W8"/>
<dbReference type="ExpressionAtlas" id="Q197W8">
    <property type="expression patterns" value="baseline and differential"/>
</dbReference>
<dbReference type="GO" id="GO:0005856">
    <property type="term" value="C:cytoskeleton"/>
    <property type="evidence" value="ECO:0007669"/>
    <property type="project" value="UniProtKB-KW"/>
</dbReference>
<dbReference type="GO" id="GO:0005730">
    <property type="term" value="C:nucleolus"/>
    <property type="evidence" value="ECO:0007669"/>
    <property type="project" value="UniProtKB-SubCell"/>
</dbReference>
<dbReference type="GO" id="GO:0009524">
    <property type="term" value="C:phragmoplast"/>
    <property type="evidence" value="ECO:0007669"/>
    <property type="project" value="UniProtKB-SubCell"/>
</dbReference>
<dbReference type="GO" id="GO:0008017">
    <property type="term" value="F:microtubule binding"/>
    <property type="evidence" value="ECO:0007669"/>
    <property type="project" value="InterPro"/>
</dbReference>
<dbReference type="GO" id="GO:2000694">
    <property type="term" value="P:regulation of phragmoplast microtubule organization"/>
    <property type="evidence" value="ECO:0007669"/>
    <property type="project" value="InterPro"/>
</dbReference>
<dbReference type="InterPro" id="IPR044709">
    <property type="entry name" value="TAN1"/>
</dbReference>
<dbReference type="PANTHER" id="PTHR35728">
    <property type="entry name" value="MICROTUBULE-BINDING PROTEIN TANGLED-RELATED"/>
    <property type="match status" value="1"/>
</dbReference>
<dbReference type="PANTHER" id="PTHR35728:SF1">
    <property type="entry name" value="MICROTUBULE-BINDING PROTEIN TANGLED-RELATED"/>
    <property type="match status" value="1"/>
</dbReference>
<organism>
    <name type="scientific">Arabidopsis thaliana</name>
    <name type="common">Mouse-ear cress</name>
    <dbReference type="NCBI Taxonomy" id="3702"/>
    <lineage>
        <taxon>Eukaryota</taxon>
        <taxon>Viridiplantae</taxon>
        <taxon>Streptophyta</taxon>
        <taxon>Embryophyta</taxon>
        <taxon>Tracheophyta</taxon>
        <taxon>Spermatophyta</taxon>
        <taxon>Magnoliopsida</taxon>
        <taxon>eudicotyledons</taxon>
        <taxon>Gunneridae</taxon>
        <taxon>Pentapetalae</taxon>
        <taxon>rosids</taxon>
        <taxon>malvids</taxon>
        <taxon>Brassicales</taxon>
        <taxon>Brassicaceae</taxon>
        <taxon>Camelineae</taxon>
        <taxon>Arabidopsis</taxon>
    </lineage>
</organism>
<protein>
    <recommendedName>
        <fullName>Microtubule-binding protein TANGLED</fullName>
        <shortName>AtTAN</shortName>
    </recommendedName>
</protein>
<name>TANA_ARATH</name>
<sequence>MVARTPQKQRKVAMVVPPLNSDLLKETINKVDKCMERLQELQYTIAGGTKVVSGVNLSPRSTRIYLKTSLRCKQETLRIKNATNKKSPVGKFPASSPGDWRKMSLPAMLLGETVNEILQASQVTRDIVDAIAPKKSRKSRRLTMSQEDDGPKTPETQQKSREQNPETVSSNIKARRKKEKQNRRSESDSPPSLQRARSRIAFRTISPQVKGNNGENSFRHLANRVSPKHKPWVKKAVLFPNPLFISGTATQQAKFSRTMSPVIARNEISSIKNNKETPYKFLIKSPPTSASKFQVKIRSPPKVLVSPTRNGSNSVRKSPRGSRSPTRTVNLGKKSASISPIRNTGKRSPKLSTAAKLRRSFTPTRNGSNLARKSSISPKRVTLQAFLSPTRNGNFCKKSPKASISPTRVCNKSQKLSTAAKFRRSFSPSRLAMRFVSPMKSRKSVAKCDDHEMVSGLKQRPVLVPKRFSIRRI</sequence>
<evidence type="ECO:0000256" key="1">
    <source>
        <dbReference type="SAM" id="MobiDB-lite"/>
    </source>
</evidence>
<evidence type="ECO:0000269" key="2">
    <source>
    </source>
</evidence>
<evidence type="ECO:0000269" key="3">
    <source>
    </source>
</evidence>
<evidence type="ECO:0000269" key="4">
    <source>
    </source>
</evidence>
<evidence type="ECO:0000305" key="5"/>
<comment type="function">
    <text evidence="3">Is required for spatial control cell division during plant development. Through an association with microtubules, acts both for the positioning of cytoskeletal arrays that establish planes of cell division during prophase and for spatial guidance of expanding phragmoplasts toward preestablished cortical division sites (CDS) during cytokinesis.</text>
</comment>
<comment type="subunit">
    <text evidence="2 4">Interacts with POK1.</text>
</comment>
<comment type="subcellular location">
    <subcellularLocation>
        <location evidence="4">Nucleus</location>
        <location evidence="4">Nucleolus</location>
    </subcellularLocation>
    <subcellularLocation>
        <location evidence="4">Nucleus</location>
    </subcellularLocation>
    <subcellularLocation>
        <location evidence="3 4">Cytoplasm</location>
        <location evidence="3 4">Cytoskeleton</location>
        <location evidence="3 4">Phragmoplast</location>
    </subcellularLocation>
    <text evidence="3">Preferentially localized to the preprophase band (PPB) during early stage of mitotis and later localized to the cortical division sites (CDS) during cytokinesis.</text>
</comment>
<comment type="tissue specificity">
    <text evidence="3">Strongly expressed in flower buds and root tips.</text>
</comment>
<comment type="disruption phenotype">
    <text evidence="3">No visible phenotype.</text>
</comment>
<comment type="caution">
    <text evidence="5">In cv. Columbia (AC Q84M91), a naturally occurring frameshift at position 444 results in a shortened C-terminus. The sequence shown is from strain cv. Landsberg erecta.</text>
</comment>
<keyword id="KW-0963">Cytoplasm</keyword>
<keyword id="KW-0206">Cytoskeleton</keyword>
<keyword id="KW-0539">Nucleus</keyword>
<reference key="1">
    <citation type="journal article" date="2007" name="Curr. Biol.">
        <title>Arabidopsis TANGLED identifies the division plane throughout mitosis and cytokinesis.</title>
        <authorList>
            <person name="Walker K.L."/>
            <person name="Muller S."/>
            <person name="Moss D."/>
            <person name="Ehrhardt D.W."/>
            <person name="Smith L.G."/>
        </authorList>
    </citation>
    <scope>NUCLEOTIDE SEQUENCE [MRNA]</scope>
    <scope>SUBCELLULAR LOCATION</scope>
    <scope>FUNCTION</scope>
    <scope>TISSUE SPECIFICITY</scope>
    <scope>DISRUPTION PHENOTYPE</scope>
    <source>
        <strain>cv. Landsberg erecta</strain>
    </source>
</reference>
<reference key="2">
    <citation type="journal article" date="2006" name="Curr. Biol.">
        <title>Two kinesins are involved in the spatial control of cytokinesis in Arabidopsis thaliana.</title>
        <authorList>
            <person name="Muller S."/>
            <person name="Han S."/>
            <person name="Smith L.G."/>
        </authorList>
    </citation>
    <scope>INTERACTION WITH POK1</scope>
    <source>
        <strain>cv. Landsberg erecta</strain>
    </source>
</reference>
<reference key="3">
    <citation type="journal article" date="2011" name="J. Cell Sci.">
        <title>Tangled localization at the cortical division site of plant cells occurs by several mechanisms.</title>
        <authorList>
            <person name="Rasmussen C.G."/>
            <person name="Sun B."/>
            <person name="Smith L.G."/>
        </authorList>
    </citation>
    <scope>SUBCELLULAR LOCATION</scope>
    <scope>INTERACTION WITH POK1</scope>
    <source>
        <strain>cv. Landsberg erecta</strain>
    </source>
</reference>
<feature type="chain" id="PRO_0000423585" description="Microtubule-binding protein TANGLED">
    <location>
        <begin position="1"/>
        <end position="473"/>
    </location>
</feature>
<feature type="region of interest" description="Required for binding to TAN and location to the cortical division sites (CDS) during cytokinesis">
    <location>
        <begin position="1"/>
        <end position="132"/>
    </location>
</feature>
<feature type="region of interest" description="Disordered" evidence="1">
    <location>
        <begin position="131"/>
        <end position="218"/>
    </location>
</feature>
<feature type="region of interest" description="Disordered" evidence="1">
    <location>
        <begin position="290"/>
        <end position="354"/>
    </location>
</feature>
<feature type="compositionally biased region" description="Polar residues" evidence="1">
    <location>
        <begin position="205"/>
        <end position="216"/>
    </location>
</feature>
<feature type="compositionally biased region" description="Polar residues" evidence="1">
    <location>
        <begin position="307"/>
        <end position="329"/>
    </location>
</feature>
<gene>
    <name type="primary">TAN</name>
    <name type="synonym">ATN</name>
</gene>